<evidence type="ECO:0000255" key="1">
    <source>
        <dbReference type="HAMAP-Rule" id="MF_00141"/>
    </source>
</evidence>
<organism>
    <name type="scientific">Streptococcus pneumoniae (strain P1031)</name>
    <dbReference type="NCBI Taxonomy" id="488223"/>
    <lineage>
        <taxon>Bacteria</taxon>
        <taxon>Bacillati</taxon>
        <taxon>Bacillota</taxon>
        <taxon>Bacilli</taxon>
        <taxon>Lactobacillales</taxon>
        <taxon>Streptococcaceae</taxon>
        <taxon>Streptococcus</taxon>
    </lineage>
</organism>
<dbReference type="EMBL" id="CP000920">
    <property type="protein sequence ID" value="ACO20255.1"/>
    <property type="molecule type" value="Genomic_DNA"/>
</dbReference>
<dbReference type="RefSeq" id="WP_000568640.1">
    <property type="nucleotide sequence ID" value="NC_012467.1"/>
</dbReference>
<dbReference type="SMR" id="C1CIT4"/>
<dbReference type="GeneID" id="49599200"/>
<dbReference type="KEGG" id="spp:SPP_0464"/>
<dbReference type="HOGENOM" id="CLU_074944_3_0_9"/>
<dbReference type="UniPathway" id="UPA00345"/>
<dbReference type="GO" id="GO:0005737">
    <property type="term" value="C:cytoplasm"/>
    <property type="evidence" value="ECO:0007669"/>
    <property type="project" value="UniProtKB-SubCell"/>
</dbReference>
<dbReference type="GO" id="GO:0003746">
    <property type="term" value="F:translation elongation factor activity"/>
    <property type="evidence" value="ECO:0007669"/>
    <property type="project" value="UniProtKB-UniRule"/>
</dbReference>
<dbReference type="GO" id="GO:0043043">
    <property type="term" value="P:peptide biosynthetic process"/>
    <property type="evidence" value="ECO:0007669"/>
    <property type="project" value="InterPro"/>
</dbReference>
<dbReference type="CDD" id="cd04470">
    <property type="entry name" value="S1_EF-P_repeat_1"/>
    <property type="match status" value="1"/>
</dbReference>
<dbReference type="CDD" id="cd05794">
    <property type="entry name" value="S1_EF-P_repeat_2"/>
    <property type="match status" value="1"/>
</dbReference>
<dbReference type="FunFam" id="2.30.30.30:FF:000003">
    <property type="entry name" value="Elongation factor P"/>
    <property type="match status" value="1"/>
</dbReference>
<dbReference type="FunFam" id="2.40.50.140:FF:000004">
    <property type="entry name" value="Elongation factor P"/>
    <property type="match status" value="1"/>
</dbReference>
<dbReference type="FunFam" id="2.40.50.140:FF:000009">
    <property type="entry name" value="Elongation factor P"/>
    <property type="match status" value="1"/>
</dbReference>
<dbReference type="Gene3D" id="2.30.30.30">
    <property type="match status" value="1"/>
</dbReference>
<dbReference type="Gene3D" id="2.40.50.140">
    <property type="entry name" value="Nucleic acid-binding proteins"/>
    <property type="match status" value="2"/>
</dbReference>
<dbReference type="HAMAP" id="MF_00141">
    <property type="entry name" value="EF_P"/>
    <property type="match status" value="1"/>
</dbReference>
<dbReference type="InterPro" id="IPR015365">
    <property type="entry name" value="Elong-fact-P_C"/>
</dbReference>
<dbReference type="InterPro" id="IPR012340">
    <property type="entry name" value="NA-bd_OB-fold"/>
</dbReference>
<dbReference type="InterPro" id="IPR014722">
    <property type="entry name" value="Rib_uL2_dom2"/>
</dbReference>
<dbReference type="InterPro" id="IPR020599">
    <property type="entry name" value="Transl_elong_fac_P/YeiP"/>
</dbReference>
<dbReference type="InterPro" id="IPR013185">
    <property type="entry name" value="Transl_elong_KOW-like"/>
</dbReference>
<dbReference type="InterPro" id="IPR001059">
    <property type="entry name" value="Transl_elong_P/YeiP_cen"/>
</dbReference>
<dbReference type="InterPro" id="IPR013852">
    <property type="entry name" value="Transl_elong_P/YeiP_CS"/>
</dbReference>
<dbReference type="InterPro" id="IPR011768">
    <property type="entry name" value="Transl_elongation_fac_P"/>
</dbReference>
<dbReference type="InterPro" id="IPR008991">
    <property type="entry name" value="Translation_prot_SH3-like_sf"/>
</dbReference>
<dbReference type="NCBIfam" id="TIGR00038">
    <property type="entry name" value="efp"/>
    <property type="match status" value="1"/>
</dbReference>
<dbReference type="NCBIfam" id="NF001810">
    <property type="entry name" value="PRK00529.1"/>
    <property type="match status" value="1"/>
</dbReference>
<dbReference type="PANTHER" id="PTHR30053">
    <property type="entry name" value="ELONGATION FACTOR P"/>
    <property type="match status" value="1"/>
</dbReference>
<dbReference type="PANTHER" id="PTHR30053:SF12">
    <property type="entry name" value="ELONGATION FACTOR P (EF-P) FAMILY PROTEIN"/>
    <property type="match status" value="1"/>
</dbReference>
<dbReference type="Pfam" id="PF01132">
    <property type="entry name" value="EFP"/>
    <property type="match status" value="1"/>
</dbReference>
<dbReference type="Pfam" id="PF08207">
    <property type="entry name" value="EFP_N"/>
    <property type="match status" value="1"/>
</dbReference>
<dbReference type="Pfam" id="PF09285">
    <property type="entry name" value="Elong-fact-P_C"/>
    <property type="match status" value="1"/>
</dbReference>
<dbReference type="PIRSF" id="PIRSF005901">
    <property type="entry name" value="EF-P"/>
    <property type="match status" value="1"/>
</dbReference>
<dbReference type="SMART" id="SM01185">
    <property type="entry name" value="EFP"/>
    <property type="match status" value="1"/>
</dbReference>
<dbReference type="SMART" id="SM00841">
    <property type="entry name" value="Elong-fact-P_C"/>
    <property type="match status" value="1"/>
</dbReference>
<dbReference type="SUPFAM" id="SSF50249">
    <property type="entry name" value="Nucleic acid-binding proteins"/>
    <property type="match status" value="2"/>
</dbReference>
<dbReference type="SUPFAM" id="SSF50104">
    <property type="entry name" value="Translation proteins SH3-like domain"/>
    <property type="match status" value="1"/>
</dbReference>
<dbReference type="PROSITE" id="PS01275">
    <property type="entry name" value="EFP"/>
    <property type="match status" value="1"/>
</dbReference>
<feature type="chain" id="PRO_1000123033" description="Elongation factor P">
    <location>
        <begin position="1"/>
        <end position="186"/>
    </location>
</feature>
<proteinExistence type="inferred from homology"/>
<accession>C1CIT4</accession>
<comment type="function">
    <text evidence="1">Involved in peptide bond synthesis. Stimulates efficient translation and peptide-bond synthesis on native or reconstituted 70S ribosomes in vitro. Probably functions indirectly by altering the affinity of the ribosome for aminoacyl-tRNA, thus increasing their reactivity as acceptors for peptidyl transferase.</text>
</comment>
<comment type="pathway">
    <text evidence="1">Protein biosynthesis; polypeptide chain elongation.</text>
</comment>
<comment type="subcellular location">
    <subcellularLocation>
        <location evidence="1">Cytoplasm</location>
    </subcellularLocation>
</comment>
<comment type="similarity">
    <text evidence="1">Belongs to the elongation factor P family.</text>
</comment>
<sequence length="186" mass="20600">MIEASKLKAGMTFETADGKLIRVLEASHHKPGKGNTIMRMKLRDVRTGSTFDTSYRPEEKFEQAIIETVPAQYLYKMDDTAYFMNTETYDQYEIPVVNVENELLYILENSDVKIQFYGTEVIGVTVPTTVELTVAETQPSIKGATVTGSGKPATMETGLVVNVPDFIEAGQKLVINTAEGTYVSRA</sequence>
<reference key="1">
    <citation type="journal article" date="2010" name="Genome Biol.">
        <title>Structure and dynamics of the pan-genome of Streptococcus pneumoniae and closely related species.</title>
        <authorList>
            <person name="Donati C."/>
            <person name="Hiller N.L."/>
            <person name="Tettelin H."/>
            <person name="Muzzi A."/>
            <person name="Croucher N.J."/>
            <person name="Angiuoli S.V."/>
            <person name="Oggioni M."/>
            <person name="Dunning Hotopp J.C."/>
            <person name="Hu F.Z."/>
            <person name="Riley D.R."/>
            <person name="Covacci A."/>
            <person name="Mitchell T.J."/>
            <person name="Bentley S.D."/>
            <person name="Kilian M."/>
            <person name="Ehrlich G.D."/>
            <person name="Rappuoli R."/>
            <person name="Moxon E.R."/>
            <person name="Masignani V."/>
        </authorList>
    </citation>
    <scope>NUCLEOTIDE SEQUENCE [LARGE SCALE GENOMIC DNA]</scope>
    <source>
        <strain>P1031</strain>
    </source>
</reference>
<name>EFP_STRZP</name>
<gene>
    <name evidence="1" type="primary">efp</name>
    <name type="ordered locus">SPP_0464</name>
</gene>
<keyword id="KW-0963">Cytoplasm</keyword>
<keyword id="KW-0251">Elongation factor</keyword>
<keyword id="KW-0648">Protein biosynthesis</keyword>
<protein>
    <recommendedName>
        <fullName evidence="1">Elongation factor P</fullName>
        <shortName evidence="1">EF-P</shortName>
    </recommendedName>
</protein>